<organism>
    <name type="scientific">Granulibacter bethesdensis (strain ATCC BAA-1260 / CGDNIH1)</name>
    <dbReference type="NCBI Taxonomy" id="391165"/>
    <lineage>
        <taxon>Bacteria</taxon>
        <taxon>Pseudomonadati</taxon>
        <taxon>Pseudomonadota</taxon>
        <taxon>Alphaproteobacteria</taxon>
        <taxon>Acetobacterales</taxon>
        <taxon>Acetobacteraceae</taxon>
        <taxon>Granulibacter</taxon>
    </lineage>
</organism>
<sequence>MLSPKRTKYRKAHKGRIHGNAKGGTTLNFGTFGLKALEPERITARQIEAARRAITRAMKRAGRVWIRIFPDLPVSTKPAEVRMGSGKGSPEYWVARVHPGRVMFEIDGVAPELAREALALGAAKLPIKTKFIVRSVDA</sequence>
<protein>
    <recommendedName>
        <fullName evidence="1">Large ribosomal subunit protein uL16</fullName>
    </recommendedName>
    <alternativeName>
        <fullName evidence="3">50S ribosomal protein L16</fullName>
    </alternativeName>
</protein>
<keyword id="KW-1185">Reference proteome</keyword>
<keyword id="KW-0687">Ribonucleoprotein</keyword>
<keyword id="KW-0689">Ribosomal protein</keyword>
<keyword id="KW-0694">RNA-binding</keyword>
<keyword id="KW-0699">rRNA-binding</keyword>
<keyword id="KW-0820">tRNA-binding</keyword>
<accession>Q0BUP3</accession>
<reference key="1">
    <citation type="journal article" date="2007" name="J. Bacteriol.">
        <title>Genome sequence analysis of the emerging human pathogenic acetic acid bacterium Granulibacter bethesdensis.</title>
        <authorList>
            <person name="Greenberg D.E."/>
            <person name="Porcella S.F."/>
            <person name="Zelazny A.M."/>
            <person name="Virtaneva K."/>
            <person name="Sturdevant D.E."/>
            <person name="Kupko J.J. III"/>
            <person name="Barbian K.D."/>
            <person name="Babar A."/>
            <person name="Dorward D.W."/>
            <person name="Holland S.M."/>
        </authorList>
    </citation>
    <scope>NUCLEOTIDE SEQUENCE [LARGE SCALE GENOMIC DNA]</scope>
    <source>
        <strain>ATCC BAA-1260 / CGDNIH1</strain>
    </source>
</reference>
<comment type="function">
    <text evidence="1">Binds 23S rRNA and is also seen to make contacts with the A and possibly P site tRNAs.</text>
</comment>
<comment type="subunit">
    <text evidence="1">Part of the 50S ribosomal subunit.</text>
</comment>
<comment type="similarity">
    <text evidence="1">Belongs to the universal ribosomal protein uL16 family.</text>
</comment>
<dbReference type="EMBL" id="CP000394">
    <property type="protein sequence ID" value="ABI61459.1"/>
    <property type="molecule type" value="Genomic_DNA"/>
</dbReference>
<dbReference type="RefSeq" id="WP_011631268.1">
    <property type="nucleotide sequence ID" value="NC_008343.2"/>
</dbReference>
<dbReference type="SMR" id="Q0BUP3"/>
<dbReference type="STRING" id="391165.GbCGDNIH1_0561"/>
<dbReference type="GeneID" id="69744814"/>
<dbReference type="KEGG" id="gbe:GbCGDNIH1_0561"/>
<dbReference type="eggNOG" id="COG0197">
    <property type="taxonomic scope" value="Bacteria"/>
</dbReference>
<dbReference type="HOGENOM" id="CLU_078858_2_1_5"/>
<dbReference type="OrthoDB" id="9802589at2"/>
<dbReference type="Proteomes" id="UP000001963">
    <property type="component" value="Chromosome"/>
</dbReference>
<dbReference type="GO" id="GO:0022625">
    <property type="term" value="C:cytosolic large ribosomal subunit"/>
    <property type="evidence" value="ECO:0007669"/>
    <property type="project" value="TreeGrafter"/>
</dbReference>
<dbReference type="GO" id="GO:0019843">
    <property type="term" value="F:rRNA binding"/>
    <property type="evidence" value="ECO:0007669"/>
    <property type="project" value="UniProtKB-UniRule"/>
</dbReference>
<dbReference type="GO" id="GO:0003735">
    <property type="term" value="F:structural constituent of ribosome"/>
    <property type="evidence" value="ECO:0007669"/>
    <property type="project" value="InterPro"/>
</dbReference>
<dbReference type="GO" id="GO:0000049">
    <property type="term" value="F:tRNA binding"/>
    <property type="evidence" value="ECO:0007669"/>
    <property type="project" value="UniProtKB-KW"/>
</dbReference>
<dbReference type="GO" id="GO:0006412">
    <property type="term" value="P:translation"/>
    <property type="evidence" value="ECO:0007669"/>
    <property type="project" value="UniProtKB-UniRule"/>
</dbReference>
<dbReference type="CDD" id="cd01433">
    <property type="entry name" value="Ribosomal_L16_L10e"/>
    <property type="match status" value="1"/>
</dbReference>
<dbReference type="FunFam" id="3.90.1170.10:FF:000001">
    <property type="entry name" value="50S ribosomal protein L16"/>
    <property type="match status" value="1"/>
</dbReference>
<dbReference type="Gene3D" id="3.90.1170.10">
    <property type="entry name" value="Ribosomal protein L10e/L16"/>
    <property type="match status" value="1"/>
</dbReference>
<dbReference type="HAMAP" id="MF_01342">
    <property type="entry name" value="Ribosomal_uL16"/>
    <property type="match status" value="1"/>
</dbReference>
<dbReference type="InterPro" id="IPR047873">
    <property type="entry name" value="Ribosomal_uL16"/>
</dbReference>
<dbReference type="InterPro" id="IPR000114">
    <property type="entry name" value="Ribosomal_uL16_bact-type"/>
</dbReference>
<dbReference type="InterPro" id="IPR020798">
    <property type="entry name" value="Ribosomal_uL16_CS"/>
</dbReference>
<dbReference type="InterPro" id="IPR016180">
    <property type="entry name" value="Ribosomal_uL16_dom"/>
</dbReference>
<dbReference type="InterPro" id="IPR036920">
    <property type="entry name" value="Ribosomal_uL16_sf"/>
</dbReference>
<dbReference type="NCBIfam" id="TIGR01164">
    <property type="entry name" value="rplP_bact"/>
    <property type="match status" value="1"/>
</dbReference>
<dbReference type="PANTHER" id="PTHR12220">
    <property type="entry name" value="50S/60S RIBOSOMAL PROTEIN L16"/>
    <property type="match status" value="1"/>
</dbReference>
<dbReference type="PANTHER" id="PTHR12220:SF13">
    <property type="entry name" value="LARGE RIBOSOMAL SUBUNIT PROTEIN UL16M"/>
    <property type="match status" value="1"/>
</dbReference>
<dbReference type="Pfam" id="PF00252">
    <property type="entry name" value="Ribosomal_L16"/>
    <property type="match status" value="1"/>
</dbReference>
<dbReference type="PRINTS" id="PR00060">
    <property type="entry name" value="RIBOSOMALL16"/>
</dbReference>
<dbReference type="SUPFAM" id="SSF54686">
    <property type="entry name" value="Ribosomal protein L16p/L10e"/>
    <property type="match status" value="1"/>
</dbReference>
<dbReference type="PROSITE" id="PS00586">
    <property type="entry name" value="RIBOSOMAL_L16_1"/>
    <property type="match status" value="1"/>
</dbReference>
<dbReference type="PROSITE" id="PS00701">
    <property type="entry name" value="RIBOSOMAL_L16_2"/>
    <property type="match status" value="1"/>
</dbReference>
<gene>
    <name evidence="1" type="primary">rplP</name>
    <name type="ordered locus">GbCGDNIH1_0561</name>
</gene>
<proteinExistence type="inferred from homology"/>
<evidence type="ECO:0000255" key="1">
    <source>
        <dbReference type="HAMAP-Rule" id="MF_01342"/>
    </source>
</evidence>
<evidence type="ECO:0000256" key="2">
    <source>
        <dbReference type="SAM" id="MobiDB-lite"/>
    </source>
</evidence>
<evidence type="ECO:0000305" key="3"/>
<name>RL16_GRABC</name>
<feature type="chain" id="PRO_1000054627" description="Large ribosomal subunit protein uL16">
    <location>
        <begin position="1"/>
        <end position="138"/>
    </location>
</feature>
<feature type="region of interest" description="Disordered" evidence="2">
    <location>
        <begin position="1"/>
        <end position="21"/>
    </location>
</feature>
<feature type="compositionally biased region" description="Basic residues" evidence="2">
    <location>
        <begin position="1"/>
        <end position="19"/>
    </location>
</feature>